<proteinExistence type="inferred from homology"/>
<evidence type="ECO:0000255" key="1">
    <source>
        <dbReference type="HAMAP-Rule" id="MF_00091"/>
    </source>
</evidence>
<sequence length="160" mass="17923">MSKEVIVESFELDHTIVKAPYVRLIGEETGPKGDIISNYDIRLVQPNEDSIPTAGLHTIEHLLAKLIRTRIDGMIDCSPFGCRTGFHMIMWGRHTSAKIAAVIKDSLKEIAETTTWEDVPGTTIESCGNYKDHSLFSAKEWAKLILEQGISDDAFERHVI</sequence>
<dbReference type="EC" id="4.4.1.21" evidence="1"/>
<dbReference type="EMBL" id="CP000920">
    <property type="protein sequence ID" value="ACO20637.1"/>
    <property type="molecule type" value="Genomic_DNA"/>
</dbReference>
<dbReference type="RefSeq" id="WP_000032550.1">
    <property type="nucleotide sequence ID" value="NC_012467.1"/>
</dbReference>
<dbReference type="SMR" id="C1CIK5"/>
<dbReference type="KEGG" id="spp:SPP_0375"/>
<dbReference type="HOGENOM" id="CLU_107531_2_1_9"/>
<dbReference type="GO" id="GO:0005506">
    <property type="term" value="F:iron ion binding"/>
    <property type="evidence" value="ECO:0007669"/>
    <property type="project" value="InterPro"/>
</dbReference>
<dbReference type="GO" id="GO:0043768">
    <property type="term" value="F:S-ribosylhomocysteine lyase activity"/>
    <property type="evidence" value="ECO:0007669"/>
    <property type="project" value="UniProtKB-UniRule"/>
</dbReference>
<dbReference type="GO" id="GO:0009372">
    <property type="term" value="P:quorum sensing"/>
    <property type="evidence" value="ECO:0007669"/>
    <property type="project" value="UniProtKB-UniRule"/>
</dbReference>
<dbReference type="Gene3D" id="3.30.1360.80">
    <property type="entry name" value="S-ribosylhomocysteinase (LuxS)"/>
    <property type="match status" value="1"/>
</dbReference>
<dbReference type="HAMAP" id="MF_00091">
    <property type="entry name" value="LuxS"/>
    <property type="match status" value="1"/>
</dbReference>
<dbReference type="InterPro" id="IPR037005">
    <property type="entry name" value="LuxS_sf"/>
</dbReference>
<dbReference type="InterPro" id="IPR011249">
    <property type="entry name" value="Metalloenz_LuxS/M16"/>
</dbReference>
<dbReference type="InterPro" id="IPR003815">
    <property type="entry name" value="S-ribosylhomocysteinase"/>
</dbReference>
<dbReference type="NCBIfam" id="NF002607">
    <property type="entry name" value="PRK02260.2-5"/>
    <property type="match status" value="1"/>
</dbReference>
<dbReference type="NCBIfam" id="NF002608">
    <property type="entry name" value="PRK02260.3-1"/>
    <property type="match status" value="1"/>
</dbReference>
<dbReference type="PANTHER" id="PTHR35799">
    <property type="entry name" value="S-RIBOSYLHOMOCYSTEINE LYASE"/>
    <property type="match status" value="1"/>
</dbReference>
<dbReference type="PANTHER" id="PTHR35799:SF1">
    <property type="entry name" value="S-RIBOSYLHOMOCYSTEINE LYASE"/>
    <property type="match status" value="1"/>
</dbReference>
<dbReference type="Pfam" id="PF02664">
    <property type="entry name" value="LuxS"/>
    <property type="match status" value="1"/>
</dbReference>
<dbReference type="PIRSF" id="PIRSF006160">
    <property type="entry name" value="AI2"/>
    <property type="match status" value="1"/>
</dbReference>
<dbReference type="PRINTS" id="PR01487">
    <property type="entry name" value="LUXSPROTEIN"/>
</dbReference>
<dbReference type="SUPFAM" id="SSF63411">
    <property type="entry name" value="LuxS/MPP-like metallohydrolase"/>
    <property type="match status" value="1"/>
</dbReference>
<reference key="1">
    <citation type="journal article" date="2010" name="Genome Biol.">
        <title>Structure and dynamics of the pan-genome of Streptococcus pneumoniae and closely related species.</title>
        <authorList>
            <person name="Donati C."/>
            <person name="Hiller N.L."/>
            <person name="Tettelin H."/>
            <person name="Muzzi A."/>
            <person name="Croucher N.J."/>
            <person name="Angiuoli S.V."/>
            <person name="Oggioni M."/>
            <person name="Dunning Hotopp J.C."/>
            <person name="Hu F.Z."/>
            <person name="Riley D.R."/>
            <person name="Covacci A."/>
            <person name="Mitchell T.J."/>
            <person name="Bentley S.D."/>
            <person name="Kilian M."/>
            <person name="Ehrlich G.D."/>
            <person name="Rappuoli R."/>
            <person name="Moxon E.R."/>
            <person name="Masignani V."/>
        </authorList>
    </citation>
    <scope>NUCLEOTIDE SEQUENCE [LARGE SCALE GENOMIC DNA]</scope>
    <source>
        <strain>P1031</strain>
    </source>
</reference>
<feature type="chain" id="PRO_1000191043" description="S-ribosylhomocysteine lyase">
    <location>
        <begin position="1"/>
        <end position="160"/>
    </location>
</feature>
<feature type="binding site" evidence="1">
    <location>
        <position position="57"/>
    </location>
    <ligand>
        <name>Fe cation</name>
        <dbReference type="ChEBI" id="CHEBI:24875"/>
    </ligand>
</feature>
<feature type="binding site" evidence="1">
    <location>
        <position position="61"/>
    </location>
    <ligand>
        <name>Fe cation</name>
        <dbReference type="ChEBI" id="CHEBI:24875"/>
    </ligand>
</feature>
<feature type="binding site" evidence="1">
    <location>
        <position position="127"/>
    </location>
    <ligand>
        <name>Fe cation</name>
        <dbReference type="ChEBI" id="CHEBI:24875"/>
    </ligand>
</feature>
<comment type="function">
    <text evidence="1">Involved in the synthesis of autoinducer 2 (AI-2) which is secreted by bacteria and is used to communicate both the cell density and the metabolic potential of the environment. The regulation of gene expression in response to changes in cell density is called quorum sensing. Catalyzes the transformation of S-ribosylhomocysteine (RHC) to homocysteine (HC) and 4,5-dihydroxy-2,3-pentadione (DPD).</text>
</comment>
<comment type="catalytic activity">
    <reaction evidence="1">
        <text>S-(5-deoxy-D-ribos-5-yl)-L-homocysteine = (S)-4,5-dihydroxypentane-2,3-dione + L-homocysteine</text>
        <dbReference type="Rhea" id="RHEA:17753"/>
        <dbReference type="ChEBI" id="CHEBI:29484"/>
        <dbReference type="ChEBI" id="CHEBI:58195"/>
        <dbReference type="ChEBI" id="CHEBI:58199"/>
        <dbReference type="EC" id="4.4.1.21"/>
    </reaction>
</comment>
<comment type="cofactor">
    <cofactor evidence="1">
        <name>Fe cation</name>
        <dbReference type="ChEBI" id="CHEBI:24875"/>
    </cofactor>
    <text evidence="1">Binds 1 Fe cation per subunit.</text>
</comment>
<comment type="subunit">
    <text evidence="1">Homodimer.</text>
</comment>
<comment type="similarity">
    <text evidence="1">Belongs to the LuxS family.</text>
</comment>
<organism>
    <name type="scientific">Streptococcus pneumoniae (strain P1031)</name>
    <dbReference type="NCBI Taxonomy" id="488223"/>
    <lineage>
        <taxon>Bacteria</taxon>
        <taxon>Bacillati</taxon>
        <taxon>Bacillota</taxon>
        <taxon>Bacilli</taxon>
        <taxon>Lactobacillales</taxon>
        <taxon>Streptococcaceae</taxon>
        <taxon>Streptococcus</taxon>
    </lineage>
</organism>
<name>LUXS_STRZP</name>
<protein>
    <recommendedName>
        <fullName evidence="1">S-ribosylhomocysteine lyase</fullName>
        <ecNumber evidence="1">4.4.1.21</ecNumber>
    </recommendedName>
    <alternativeName>
        <fullName evidence="1">AI-2 synthesis protein</fullName>
    </alternativeName>
    <alternativeName>
        <fullName evidence="1">Autoinducer-2 production protein LuxS</fullName>
    </alternativeName>
</protein>
<keyword id="KW-0071">Autoinducer synthesis</keyword>
<keyword id="KW-0408">Iron</keyword>
<keyword id="KW-0456">Lyase</keyword>
<keyword id="KW-0479">Metal-binding</keyword>
<keyword id="KW-0673">Quorum sensing</keyword>
<accession>C1CIK5</accession>
<gene>
    <name evidence="1" type="primary">luxS</name>
    <name type="ordered locus">SPP_0375</name>
</gene>